<feature type="chain" id="PRO_0000336261" description="UPF0102 protein Ssed_4252">
    <location>
        <begin position="1"/>
        <end position="117"/>
    </location>
</feature>
<protein>
    <recommendedName>
        <fullName evidence="1">UPF0102 protein Ssed_4252</fullName>
    </recommendedName>
</protein>
<name>Y4252_SHESH</name>
<comment type="similarity">
    <text evidence="1">Belongs to the UPF0102 family.</text>
</comment>
<accession>A8G183</accession>
<organism>
    <name type="scientific">Shewanella sediminis (strain HAW-EB3)</name>
    <dbReference type="NCBI Taxonomy" id="425104"/>
    <lineage>
        <taxon>Bacteria</taxon>
        <taxon>Pseudomonadati</taxon>
        <taxon>Pseudomonadota</taxon>
        <taxon>Gammaproteobacteria</taxon>
        <taxon>Alteromonadales</taxon>
        <taxon>Shewanellaceae</taxon>
        <taxon>Shewanella</taxon>
    </lineage>
</organism>
<evidence type="ECO:0000255" key="1">
    <source>
        <dbReference type="HAMAP-Rule" id="MF_00048"/>
    </source>
</evidence>
<keyword id="KW-1185">Reference proteome</keyword>
<gene>
    <name type="ordered locus">Ssed_4252</name>
</gene>
<proteinExistence type="inferred from homology"/>
<sequence length="117" mass="13382">MMDNNEPISAEHGQAGENLAMNYLLEQGLTFIERNVRFKFGEIDLVMKNGKEWIFVEVKYRSKSQYGGAINALSSGQIKRLRRAAEHYMQLNNIDAICRFDLIAVDAGQIQWLPNAF</sequence>
<dbReference type="EMBL" id="CP000821">
    <property type="protein sequence ID" value="ABV38856.1"/>
    <property type="molecule type" value="Genomic_DNA"/>
</dbReference>
<dbReference type="RefSeq" id="WP_012144585.1">
    <property type="nucleotide sequence ID" value="NC_009831.1"/>
</dbReference>
<dbReference type="SMR" id="A8G183"/>
<dbReference type="STRING" id="425104.Ssed_4252"/>
<dbReference type="KEGG" id="sse:Ssed_4252"/>
<dbReference type="eggNOG" id="COG0792">
    <property type="taxonomic scope" value="Bacteria"/>
</dbReference>
<dbReference type="HOGENOM" id="CLU_115353_1_0_6"/>
<dbReference type="OrthoDB" id="9794876at2"/>
<dbReference type="Proteomes" id="UP000002015">
    <property type="component" value="Chromosome"/>
</dbReference>
<dbReference type="GO" id="GO:0003676">
    <property type="term" value="F:nucleic acid binding"/>
    <property type="evidence" value="ECO:0007669"/>
    <property type="project" value="InterPro"/>
</dbReference>
<dbReference type="CDD" id="cd20736">
    <property type="entry name" value="PoNe_Nuclease"/>
    <property type="match status" value="1"/>
</dbReference>
<dbReference type="Gene3D" id="3.40.1350.10">
    <property type="match status" value="1"/>
</dbReference>
<dbReference type="HAMAP" id="MF_00048">
    <property type="entry name" value="UPF0102"/>
    <property type="match status" value="1"/>
</dbReference>
<dbReference type="InterPro" id="IPR011335">
    <property type="entry name" value="Restrct_endonuc-II-like"/>
</dbReference>
<dbReference type="InterPro" id="IPR011856">
    <property type="entry name" value="tRNA_endonuc-like_dom_sf"/>
</dbReference>
<dbReference type="InterPro" id="IPR003509">
    <property type="entry name" value="UPF0102_YraN-like"/>
</dbReference>
<dbReference type="NCBIfam" id="NF009150">
    <property type="entry name" value="PRK12497.1-3"/>
    <property type="match status" value="1"/>
</dbReference>
<dbReference type="NCBIfam" id="TIGR00252">
    <property type="entry name" value="YraN family protein"/>
    <property type="match status" value="1"/>
</dbReference>
<dbReference type="PANTHER" id="PTHR34039">
    <property type="entry name" value="UPF0102 PROTEIN YRAN"/>
    <property type="match status" value="1"/>
</dbReference>
<dbReference type="PANTHER" id="PTHR34039:SF1">
    <property type="entry name" value="UPF0102 PROTEIN YRAN"/>
    <property type="match status" value="1"/>
</dbReference>
<dbReference type="Pfam" id="PF02021">
    <property type="entry name" value="UPF0102"/>
    <property type="match status" value="1"/>
</dbReference>
<dbReference type="SUPFAM" id="SSF52980">
    <property type="entry name" value="Restriction endonuclease-like"/>
    <property type="match status" value="1"/>
</dbReference>
<reference key="1">
    <citation type="submission" date="2007-08" db="EMBL/GenBank/DDBJ databases">
        <title>Complete sequence of Shewanella sediminis HAW-EB3.</title>
        <authorList>
            <consortium name="US DOE Joint Genome Institute"/>
            <person name="Copeland A."/>
            <person name="Lucas S."/>
            <person name="Lapidus A."/>
            <person name="Barry K."/>
            <person name="Glavina del Rio T."/>
            <person name="Dalin E."/>
            <person name="Tice H."/>
            <person name="Pitluck S."/>
            <person name="Chertkov O."/>
            <person name="Brettin T."/>
            <person name="Bruce D."/>
            <person name="Detter J.C."/>
            <person name="Han C."/>
            <person name="Schmutz J."/>
            <person name="Larimer F."/>
            <person name="Land M."/>
            <person name="Hauser L."/>
            <person name="Kyrpides N."/>
            <person name="Kim E."/>
            <person name="Zhao J.-S."/>
            <person name="Richardson P."/>
        </authorList>
    </citation>
    <scope>NUCLEOTIDE SEQUENCE [LARGE SCALE GENOMIC DNA]</scope>
    <source>
        <strain>HAW-EB3</strain>
    </source>
</reference>